<name>THIC_PSEA8</name>
<comment type="function">
    <text evidence="1">Catalyzes the synthesis of the hydroxymethylpyrimidine phosphate (HMP-P) moiety of thiamine from aminoimidazole ribotide (AIR) in a radical S-adenosyl-L-methionine (SAM)-dependent reaction.</text>
</comment>
<comment type="catalytic activity">
    <reaction evidence="1">
        <text>5-amino-1-(5-phospho-beta-D-ribosyl)imidazole + S-adenosyl-L-methionine = 4-amino-2-methyl-5-(phosphooxymethyl)pyrimidine + CO + 5'-deoxyadenosine + formate + L-methionine + 3 H(+)</text>
        <dbReference type="Rhea" id="RHEA:24840"/>
        <dbReference type="ChEBI" id="CHEBI:15378"/>
        <dbReference type="ChEBI" id="CHEBI:15740"/>
        <dbReference type="ChEBI" id="CHEBI:17245"/>
        <dbReference type="ChEBI" id="CHEBI:17319"/>
        <dbReference type="ChEBI" id="CHEBI:57844"/>
        <dbReference type="ChEBI" id="CHEBI:58354"/>
        <dbReference type="ChEBI" id="CHEBI:59789"/>
        <dbReference type="ChEBI" id="CHEBI:137981"/>
        <dbReference type="EC" id="4.1.99.17"/>
    </reaction>
</comment>
<comment type="cofactor">
    <cofactor evidence="1">
        <name>[4Fe-4S] cluster</name>
        <dbReference type="ChEBI" id="CHEBI:49883"/>
    </cofactor>
    <text evidence="1">Binds 1 [4Fe-4S] cluster per subunit. The cluster is coordinated with 3 cysteines and an exchangeable S-adenosyl-L-methionine.</text>
</comment>
<comment type="pathway">
    <text evidence="1">Cofactor biosynthesis; thiamine diphosphate biosynthesis.</text>
</comment>
<comment type="subunit">
    <text evidence="1">Homodimer.</text>
</comment>
<comment type="similarity">
    <text evidence="1">Belongs to the ThiC family.</text>
</comment>
<reference key="1">
    <citation type="journal article" date="2009" name="Genome Res.">
        <title>Newly introduced genomic prophage islands are critical determinants of in vivo competitiveness in the Liverpool epidemic strain of Pseudomonas aeruginosa.</title>
        <authorList>
            <person name="Winstanley C."/>
            <person name="Langille M.G.I."/>
            <person name="Fothergill J.L."/>
            <person name="Kukavica-Ibrulj I."/>
            <person name="Paradis-Bleau C."/>
            <person name="Sanschagrin F."/>
            <person name="Thomson N.R."/>
            <person name="Winsor G.L."/>
            <person name="Quail M.A."/>
            <person name="Lennard N."/>
            <person name="Bignell A."/>
            <person name="Clarke L."/>
            <person name="Seeger K."/>
            <person name="Saunders D."/>
            <person name="Harris D."/>
            <person name="Parkhill J."/>
            <person name="Hancock R.E.W."/>
            <person name="Brinkman F.S.L."/>
            <person name="Levesque R.C."/>
        </authorList>
    </citation>
    <scope>NUCLEOTIDE SEQUENCE [LARGE SCALE GENOMIC DNA]</scope>
    <source>
        <strain>LESB58</strain>
    </source>
</reference>
<keyword id="KW-0004">4Fe-4S</keyword>
<keyword id="KW-0408">Iron</keyword>
<keyword id="KW-0411">Iron-sulfur</keyword>
<keyword id="KW-0456">Lyase</keyword>
<keyword id="KW-0479">Metal-binding</keyword>
<keyword id="KW-0949">S-adenosyl-L-methionine</keyword>
<keyword id="KW-0784">Thiamine biosynthesis</keyword>
<keyword id="KW-0862">Zinc</keyword>
<accession>B7V362</accession>
<dbReference type="EC" id="4.1.99.17" evidence="1"/>
<dbReference type="EMBL" id="FM209186">
    <property type="protein sequence ID" value="CAW30113.1"/>
    <property type="molecule type" value="Genomic_DNA"/>
</dbReference>
<dbReference type="RefSeq" id="WP_003095696.1">
    <property type="nucleotide sequence ID" value="NC_011770.1"/>
</dbReference>
<dbReference type="SMR" id="B7V362"/>
<dbReference type="KEGG" id="pag:PLES_53591"/>
<dbReference type="HOGENOM" id="CLU_013181_2_1_6"/>
<dbReference type="UniPathway" id="UPA00060"/>
<dbReference type="GO" id="GO:0005829">
    <property type="term" value="C:cytosol"/>
    <property type="evidence" value="ECO:0007669"/>
    <property type="project" value="TreeGrafter"/>
</dbReference>
<dbReference type="GO" id="GO:0051539">
    <property type="term" value="F:4 iron, 4 sulfur cluster binding"/>
    <property type="evidence" value="ECO:0007669"/>
    <property type="project" value="UniProtKB-KW"/>
</dbReference>
<dbReference type="GO" id="GO:0016830">
    <property type="term" value="F:carbon-carbon lyase activity"/>
    <property type="evidence" value="ECO:0007669"/>
    <property type="project" value="InterPro"/>
</dbReference>
<dbReference type="GO" id="GO:0008270">
    <property type="term" value="F:zinc ion binding"/>
    <property type="evidence" value="ECO:0007669"/>
    <property type="project" value="UniProtKB-UniRule"/>
</dbReference>
<dbReference type="GO" id="GO:0009228">
    <property type="term" value="P:thiamine biosynthetic process"/>
    <property type="evidence" value="ECO:0007669"/>
    <property type="project" value="UniProtKB-KW"/>
</dbReference>
<dbReference type="GO" id="GO:0009229">
    <property type="term" value="P:thiamine diphosphate biosynthetic process"/>
    <property type="evidence" value="ECO:0007669"/>
    <property type="project" value="UniProtKB-UniRule"/>
</dbReference>
<dbReference type="FunFam" id="3.20.20.540:FF:000001">
    <property type="entry name" value="Phosphomethylpyrimidine synthase"/>
    <property type="match status" value="1"/>
</dbReference>
<dbReference type="Gene3D" id="6.10.250.620">
    <property type="match status" value="1"/>
</dbReference>
<dbReference type="Gene3D" id="3.20.20.540">
    <property type="entry name" value="Radical SAM ThiC family, central domain"/>
    <property type="match status" value="1"/>
</dbReference>
<dbReference type="HAMAP" id="MF_00089">
    <property type="entry name" value="ThiC"/>
    <property type="match status" value="1"/>
</dbReference>
<dbReference type="InterPro" id="IPR037509">
    <property type="entry name" value="ThiC"/>
</dbReference>
<dbReference type="InterPro" id="IPR025747">
    <property type="entry name" value="ThiC-associated_dom"/>
</dbReference>
<dbReference type="InterPro" id="IPR038521">
    <property type="entry name" value="ThiC/Bza_core_dom"/>
</dbReference>
<dbReference type="InterPro" id="IPR002817">
    <property type="entry name" value="ThiC/BzaA/B"/>
</dbReference>
<dbReference type="NCBIfam" id="NF006763">
    <property type="entry name" value="PRK09284.1"/>
    <property type="match status" value="1"/>
</dbReference>
<dbReference type="NCBIfam" id="NF009895">
    <property type="entry name" value="PRK13352.1"/>
    <property type="match status" value="1"/>
</dbReference>
<dbReference type="NCBIfam" id="TIGR00190">
    <property type="entry name" value="thiC"/>
    <property type="match status" value="1"/>
</dbReference>
<dbReference type="PANTHER" id="PTHR30557:SF1">
    <property type="entry name" value="PHOSPHOMETHYLPYRIMIDINE SYNTHASE, CHLOROPLASTIC"/>
    <property type="match status" value="1"/>
</dbReference>
<dbReference type="PANTHER" id="PTHR30557">
    <property type="entry name" value="THIAMINE BIOSYNTHESIS PROTEIN THIC"/>
    <property type="match status" value="1"/>
</dbReference>
<dbReference type="Pfam" id="PF13667">
    <property type="entry name" value="ThiC-associated"/>
    <property type="match status" value="1"/>
</dbReference>
<dbReference type="Pfam" id="PF01964">
    <property type="entry name" value="ThiC_Rad_SAM"/>
    <property type="match status" value="1"/>
</dbReference>
<dbReference type="SFLD" id="SFLDF00407">
    <property type="entry name" value="phosphomethylpyrimidine_syntha"/>
    <property type="match status" value="1"/>
</dbReference>
<dbReference type="SFLD" id="SFLDG01114">
    <property type="entry name" value="phosphomethylpyrimidine_syntha"/>
    <property type="match status" value="1"/>
</dbReference>
<dbReference type="SFLD" id="SFLDS00113">
    <property type="entry name" value="Radical_SAM_Phosphomethylpyrim"/>
    <property type="match status" value="1"/>
</dbReference>
<gene>
    <name evidence="1" type="primary">thiC</name>
    <name type="ordered locus">PLES_53591</name>
</gene>
<proteinExistence type="inferred from homology"/>
<feature type="chain" id="PRO_1000198062" description="Phosphomethylpyrimidine synthase">
    <location>
        <begin position="1"/>
        <end position="627"/>
    </location>
</feature>
<feature type="region of interest" description="Disordered" evidence="2">
    <location>
        <begin position="1"/>
        <end position="29"/>
    </location>
</feature>
<feature type="compositionally biased region" description="Polar residues" evidence="2">
    <location>
        <begin position="1"/>
        <end position="24"/>
    </location>
</feature>
<feature type="binding site" evidence="1">
    <location>
        <position position="231"/>
    </location>
    <ligand>
        <name>substrate</name>
    </ligand>
</feature>
<feature type="binding site" evidence="1">
    <location>
        <position position="260"/>
    </location>
    <ligand>
        <name>substrate</name>
    </ligand>
</feature>
<feature type="binding site" evidence="1">
    <location>
        <position position="289"/>
    </location>
    <ligand>
        <name>substrate</name>
    </ligand>
</feature>
<feature type="binding site" evidence="1">
    <location>
        <position position="325"/>
    </location>
    <ligand>
        <name>substrate</name>
    </ligand>
</feature>
<feature type="binding site" evidence="1">
    <location>
        <begin position="345"/>
        <end position="347"/>
    </location>
    <ligand>
        <name>substrate</name>
    </ligand>
</feature>
<feature type="binding site" evidence="1">
    <location>
        <begin position="386"/>
        <end position="389"/>
    </location>
    <ligand>
        <name>substrate</name>
    </ligand>
</feature>
<feature type="binding site" evidence="1">
    <location>
        <position position="425"/>
    </location>
    <ligand>
        <name>substrate</name>
    </ligand>
</feature>
<feature type="binding site" evidence="1">
    <location>
        <position position="429"/>
    </location>
    <ligand>
        <name>Zn(2+)</name>
        <dbReference type="ChEBI" id="CHEBI:29105"/>
    </ligand>
</feature>
<feature type="binding site" evidence="1">
    <location>
        <position position="452"/>
    </location>
    <ligand>
        <name>substrate</name>
    </ligand>
</feature>
<feature type="binding site" evidence="1">
    <location>
        <position position="493"/>
    </location>
    <ligand>
        <name>Zn(2+)</name>
        <dbReference type="ChEBI" id="CHEBI:29105"/>
    </ligand>
</feature>
<feature type="binding site" evidence="1">
    <location>
        <position position="573"/>
    </location>
    <ligand>
        <name>[4Fe-4S] cluster</name>
        <dbReference type="ChEBI" id="CHEBI:49883"/>
        <note>4Fe-4S-S-AdoMet</note>
    </ligand>
</feature>
<feature type="binding site" evidence="1">
    <location>
        <position position="576"/>
    </location>
    <ligand>
        <name>[4Fe-4S] cluster</name>
        <dbReference type="ChEBI" id="CHEBI:49883"/>
        <note>4Fe-4S-S-AdoMet</note>
    </ligand>
</feature>
<feature type="binding site" evidence="1">
    <location>
        <position position="581"/>
    </location>
    <ligand>
        <name>[4Fe-4S] cluster</name>
        <dbReference type="ChEBI" id="CHEBI:49883"/>
        <note>4Fe-4S-S-AdoMet</note>
    </ligand>
</feature>
<sequence length="627" mass="69784">MSATQKNNITRLEQLDRQSTQPFPNSRKVYLTGSRPDIRVPVREISLADTPTAFGGEKNPPVFVYDTSGPYTDPEVRIDLRKGLPDVRSRWIDERGDTEILPGLTSEFGQARLADASLDALRFAHVRTPRRAKPGANVSQMHYAKKGIITPEMEYIAIRENMKLQEARAAGLLDQQHPGHSFGANIPKEITPEFVREEVARGRAIIPANINHTELEPMIIGRNFLVKINGNIGNSALGSSIEEEVEKLTWGIRWGADTVMDLSTGKHIHETREWILRNSPVPIGTVPIYQALEKVNGVAEDLTWEIFRDTLIEQAEQGVDYFTIHAGVLLRYVPLTAKRVTGIVSRGGSIMAKWCLAHHQENFLYTHFEEICEIMKAYDVSFSLGDGLRPGSVADANDAAQFGELETLGELTKIAWKHDVQVMIEGPGHVPMQLIKENMDKQLECCDEAPFYTLGPLTTDIAPGYDHITSGIGAAMIGWFGCAMLCYVTPKEHLGLPNKDDVKTGIITYKIAAHAADLAKGHPGAQIRDNALSKARFEFRWEDQFNLGLDPDTARAFHDETLPKDSAKVAHFCSMCGPKFCSMKITQEVRDYAKENGLSDESKAIEAGFQEQAARFKDEGSVIYRQV</sequence>
<organism>
    <name type="scientific">Pseudomonas aeruginosa (strain LESB58)</name>
    <dbReference type="NCBI Taxonomy" id="557722"/>
    <lineage>
        <taxon>Bacteria</taxon>
        <taxon>Pseudomonadati</taxon>
        <taxon>Pseudomonadota</taxon>
        <taxon>Gammaproteobacteria</taxon>
        <taxon>Pseudomonadales</taxon>
        <taxon>Pseudomonadaceae</taxon>
        <taxon>Pseudomonas</taxon>
    </lineage>
</organism>
<evidence type="ECO:0000255" key="1">
    <source>
        <dbReference type="HAMAP-Rule" id="MF_00089"/>
    </source>
</evidence>
<evidence type="ECO:0000256" key="2">
    <source>
        <dbReference type="SAM" id="MobiDB-lite"/>
    </source>
</evidence>
<protein>
    <recommendedName>
        <fullName evidence="1">Phosphomethylpyrimidine synthase</fullName>
        <ecNumber evidence="1">4.1.99.17</ecNumber>
    </recommendedName>
    <alternativeName>
        <fullName evidence="1">Hydroxymethylpyrimidine phosphate synthase</fullName>
        <shortName evidence="1">HMP-P synthase</shortName>
        <shortName evidence="1">HMP-phosphate synthase</shortName>
        <shortName evidence="1">HMPP synthase</shortName>
    </alternativeName>
    <alternativeName>
        <fullName evidence="1">Thiamine biosynthesis protein ThiC</fullName>
    </alternativeName>
</protein>